<sequence length="363" mass="38456">MKCKLIFAVFMLAFSMPSQAERIKDIANVQGVRNNQLIGYGLVVGLPGTGEKTNYTEQTFTTMLKNFGINLPENFRPKIKNVAVVAVHADMPAFIKPGQELDVTVSSLGEAKSLRGGTLLQTFLKGVDGNVYAIAQGSLVVSGFSADGLDGSKVIQNTPTVGRIPNGAIVERSVATPFSTGDYLTFNLRRSDFSTAQRMADAINDLLGPDMARPLDATSIQVSAPRDVSQRVSFLATLENIEVEPAEESAKVIVNSRTGTIVVGQNVKLLPAAVTHGGLTVTIAEATQVSQPNALANGQTTVTSNSTINATESDRRMFMFNPGTTLDELVRAVNLVGAAPSDVLAILEALKVAGALHGELIII</sequence>
<name>FLGI_SHEON</name>
<gene>
    <name evidence="1" type="primary">flgI</name>
    <name type="ordered locus">SO_3242</name>
</gene>
<dbReference type="EMBL" id="AE014299">
    <property type="protein sequence ID" value="AAN56240.1"/>
    <property type="molecule type" value="Genomic_DNA"/>
</dbReference>
<dbReference type="RefSeq" id="NP_718796.1">
    <property type="nucleotide sequence ID" value="NC_004347.2"/>
</dbReference>
<dbReference type="RefSeq" id="WP_011073126.1">
    <property type="nucleotide sequence ID" value="NC_004347.2"/>
</dbReference>
<dbReference type="SMR" id="Q8ECA2"/>
<dbReference type="STRING" id="211586.SO_3242"/>
<dbReference type="PaxDb" id="211586-SO_3242"/>
<dbReference type="KEGG" id="son:SO_3242"/>
<dbReference type="PATRIC" id="fig|211586.12.peg.3149"/>
<dbReference type="eggNOG" id="COG1706">
    <property type="taxonomic scope" value="Bacteria"/>
</dbReference>
<dbReference type="HOGENOM" id="CLU_045235_1_0_6"/>
<dbReference type="OrthoDB" id="9786431at2"/>
<dbReference type="PhylomeDB" id="Q8ECA2"/>
<dbReference type="BioCyc" id="SONE211586:G1GMP-3021-MONOMER"/>
<dbReference type="Proteomes" id="UP000008186">
    <property type="component" value="Chromosome"/>
</dbReference>
<dbReference type="GO" id="GO:0009428">
    <property type="term" value="C:bacterial-type flagellum basal body, distal rod, P ring"/>
    <property type="evidence" value="ECO:0000318"/>
    <property type="project" value="GO_Central"/>
</dbReference>
<dbReference type="GO" id="GO:0030288">
    <property type="term" value="C:outer membrane-bounded periplasmic space"/>
    <property type="evidence" value="ECO:0007669"/>
    <property type="project" value="InterPro"/>
</dbReference>
<dbReference type="GO" id="GO:0005198">
    <property type="term" value="F:structural molecule activity"/>
    <property type="evidence" value="ECO:0007669"/>
    <property type="project" value="InterPro"/>
</dbReference>
<dbReference type="GO" id="GO:0071973">
    <property type="term" value="P:bacterial-type flagellum-dependent cell motility"/>
    <property type="evidence" value="ECO:0000318"/>
    <property type="project" value="GO_Central"/>
</dbReference>
<dbReference type="HAMAP" id="MF_00416">
    <property type="entry name" value="FlgI"/>
    <property type="match status" value="1"/>
</dbReference>
<dbReference type="InterPro" id="IPR001782">
    <property type="entry name" value="Flag_FlgI"/>
</dbReference>
<dbReference type="NCBIfam" id="NF003676">
    <property type="entry name" value="PRK05303.1"/>
    <property type="match status" value="1"/>
</dbReference>
<dbReference type="PANTHER" id="PTHR30381">
    <property type="entry name" value="FLAGELLAR P-RING PERIPLASMIC PROTEIN FLGI"/>
    <property type="match status" value="1"/>
</dbReference>
<dbReference type="PANTHER" id="PTHR30381:SF0">
    <property type="entry name" value="FLAGELLAR P-RING PROTEIN"/>
    <property type="match status" value="1"/>
</dbReference>
<dbReference type="Pfam" id="PF02119">
    <property type="entry name" value="FlgI"/>
    <property type="match status" value="1"/>
</dbReference>
<dbReference type="PRINTS" id="PR01010">
    <property type="entry name" value="FLGPRINGFLGI"/>
</dbReference>
<comment type="function">
    <text evidence="1">Assembles around the rod to form the L-ring and probably protects the motor/basal body from shearing forces during rotation.</text>
</comment>
<comment type="subunit">
    <text evidence="1">The basal body constitutes a major portion of the flagellar organelle and consists of four rings (L,P,S, and M) mounted on a central rod.</text>
</comment>
<comment type="subcellular location">
    <subcellularLocation>
        <location evidence="1">Periplasm</location>
    </subcellularLocation>
    <subcellularLocation>
        <location evidence="1">Bacterial flagellum basal body</location>
    </subcellularLocation>
</comment>
<comment type="similarity">
    <text evidence="1">Belongs to the FlgI family.</text>
</comment>
<protein>
    <recommendedName>
        <fullName evidence="1">Flagellar P-ring protein</fullName>
    </recommendedName>
    <alternativeName>
        <fullName evidence="1">Basal body P-ring protein</fullName>
    </alternativeName>
</protein>
<feature type="signal peptide" evidence="1">
    <location>
        <begin position="1"/>
        <end position="20"/>
    </location>
</feature>
<feature type="chain" id="PRO_0000009522" description="Flagellar P-ring protein">
    <location>
        <begin position="21"/>
        <end position="363"/>
    </location>
</feature>
<evidence type="ECO:0000255" key="1">
    <source>
        <dbReference type="HAMAP-Rule" id="MF_00416"/>
    </source>
</evidence>
<reference key="1">
    <citation type="journal article" date="2002" name="Nat. Biotechnol.">
        <title>Genome sequence of the dissimilatory metal ion-reducing bacterium Shewanella oneidensis.</title>
        <authorList>
            <person name="Heidelberg J.F."/>
            <person name="Paulsen I.T."/>
            <person name="Nelson K.E."/>
            <person name="Gaidos E.J."/>
            <person name="Nelson W.C."/>
            <person name="Read T.D."/>
            <person name="Eisen J.A."/>
            <person name="Seshadri R."/>
            <person name="Ward N.L."/>
            <person name="Methe B.A."/>
            <person name="Clayton R.A."/>
            <person name="Meyer T."/>
            <person name="Tsapin A."/>
            <person name="Scott J."/>
            <person name="Beanan M.J."/>
            <person name="Brinkac L.M."/>
            <person name="Daugherty S.C."/>
            <person name="DeBoy R.T."/>
            <person name="Dodson R.J."/>
            <person name="Durkin A.S."/>
            <person name="Haft D.H."/>
            <person name="Kolonay J.F."/>
            <person name="Madupu R."/>
            <person name="Peterson J.D."/>
            <person name="Umayam L.A."/>
            <person name="White O."/>
            <person name="Wolf A.M."/>
            <person name="Vamathevan J.J."/>
            <person name="Weidman J.F."/>
            <person name="Impraim M."/>
            <person name="Lee K."/>
            <person name="Berry K.J."/>
            <person name="Lee C."/>
            <person name="Mueller J."/>
            <person name="Khouri H.M."/>
            <person name="Gill J."/>
            <person name="Utterback T.R."/>
            <person name="McDonald L.A."/>
            <person name="Feldblyum T.V."/>
            <person name="Smith H.O."/>
            <person name="Venter J.C."/>
            <person name="Nealson K.H."/>
            <person name="Fraser C.M."/>
        </authorList>
    </citation>
    <scope>NUCLEOTIDE SEQUENCE [LARGE SCALE GENOMIC DNA]</scope>
    <source>
        <strain>ATCC 700550 / JCM 31522 / CIP 106686 / LMG 19005 / NCIMB 14063 / MR-1</strain>
    </source>
</reference>
<organism>
    <name type="scientific">Shewanella oneidensis (strain ATCC 700550 / JCM 31522 / CIP 106686 / LMG 19005 / NCIMB 14063 / MR-1)</name>
    <dbReference type="NCBI Taxonomy" id="211586"/>
    <lineage>
        <taxon>Bacteria</taxon>
        <taxon>Pseudomonadati</taxon>
        <taxon>Pseudomonadota</taxon>
        <taxon>Gammaproteobacteria</taxon>
        <taxon>Alteromonadales</taxon>
        <taxon>Shewanellaceae</taxon>
        <taxon>Shewanella</taxon>
    </lineage>
</organism>
<keyword id="KW-0975">Bacterial flagellum</keyword>
<keyword id="KW-0574">Periplasm</keyword>
<keyword id="KW-1185">Reference proteome</keyword>
<keyword id="KW-0732">Signal</keyword>
<accession>Q8ECA2</accession>
<proteinExistence type="inferred from homology"/>